<accession>B4U738</accession>
<sequence length="1563" mass="176240">MKRGLLPFNKIKLLLASPEQILSWSHGEVKRPETLNYRTLKPEKEGLFCAKIFGPLKDYECLCGKYKGKRFEGTICDRCGVEVTKAYVRRERFGHITLATPCAHIWFLKSSPSKIGALLGLSARDIEKVIYFESYLVVEYPTPDMEATFSNSENTIPVIKDGVTHHVKLHVVTEEQYEKEFAYSIDNRYESGMGAEFVRYVLSILDLETFAFKLKKILKPYTFGFEDLGPKMELEHKKLYEKIIMFLADRVKLYSVGIATSLNGVQMSIEDVIHGIVSESIYLNIKTGEISNQDLGDDWYTSKDAIRYRFEYVRGQNQNIPVFDKIQEDVRNIVLKDFSDTRVKNLVKTLKLVEGFLKSSNRPEWMILTVLPVIPPELRPLVALDGGKFATSDLNDLYRRLINRNNRLKRLIDLDAPDIIVRNEKRMLQESVDVLIDNGKRGKVVSQHNRPLKSLSDYLKGKQGRFRQNLLGKRVDYSGRSVIVVGPSLKMHQCGLPKIMALELFKPFVYRRLEEKGYATSIKNARKMVDQKQPEVWECLEEVVKQHPVLLNRAPTLHRMSIQAFEPVLVEGKAIQLHPLVCPPFNADFDGDQMAVHVPLGIEAQLESYILILSTQNILSPANGRPIMLPSQDMVLGLFYASNYVKGAKGEGKVFFSKEDAFLAFENKKIDIHAVIKVKIGDTFVETNIGRLLINEALPKGYRFVNEVLDKKSISKLIADIHKIYGSEITAQTLDRLKEFGFEMATRAGISIGIEDMKIPKAKKRLVDKAFHQMDEVLDQYRKGIITNKERYNKTIDIWSQTTEDVTKAMFSEIEKSEQIENGKKLPGLFNPIYMMANSGARGNKDQLRQLAGMRGLMAKHSGEFIETPITSNFREGLSVLEYFISTYGARKGLADTALKTSFAGYLTRRLVDVAQDMVISEYDCGTKKYEVIEAIVESGEEKISLKERLIGRVLAEDIYDPNSKELIAKANDVLDEELTARIQQAGVVQVKARSVLNCESENGICSMCYGWDLSQRKLVSPGEAVGIIAAQSIGEPGTQLTMRTFHIGGAATAQKVQSELIIESSGIIKFQGLRLLKNRNGGLINISQEGVIFVLDPNGRTIERHTVPYAAEILFKDGSEVKQGDIVAKWDPFNTYIIAESSGELVLKDIIVDVTVREEKDTLTGKTAIVVSFLRAKDAQLHSPRIVIKSEDGNEYSYDLPVNSILNIPFEKLKTIWDKCLACSEAEKNDVQHNYYYLDKFVVHPGDIIARIPKETTKVRDIVGGLPRVEELFEARKPKNPAIISEIDGIVKIYEDADEVMVISPKGTKKYDIKNEFILIKHGQEVKEGTKITDTIVSDVSGKAIVRAKGSKIVVYNKQTGQEKVYSVPKGKFLQVKDGDYVKVGDQLTDGTPLLEEILKIKGIDELQKFLLKEVQMVYKLQGVDINDKHIEIIIRQMLRKRVIVDPGDSRFVANEEVDVIEFNKEVERIRKEDGKIPKAEPILVGITKAALSTKSWISAASFQETTRVLTEAASEGKVDDLSGIKENVIIGNLIPAGTGLEEYKNVKIEIAEHVTQFKKQT</sequence>
<proteinExistence type="inferred from homology"/>
<evidence type="ECO:0000255" key="1">
    <source>
        <dbReference type="HAMAP-Rule" id="MF_01322"/>
    </source>
</evidence>
<feature type="chain" id="PRO_0000353382" description="DNA-directed RNA polymerase subunit beta'">
    <location>
        <begin position="1"/>
        <end position="1563"/>
    </location>
</feature>
<feature type="binding site" evidence="1">
    <location>
        <position position="61"/>
    </location>
    <ligand>
        <name>Zn(2+)</name>
        <dbReference type="ChEBI" id="CHEBI:29105"/>
        <label>1</label>
    </ligand>
</feature>
<feature type="binding site" evidence="1">
    <location>
        <position position="63"/>
    </location>
    <ligand>
        <name>Zn(2+)</name>
        <dbReference type="ChEBI" id="CHEBI:29105"/>
        <label>1</label>
    </ligand>
</feature>
<feature type="binding site" evidence="1">
    <location>
        <position position="76"/>
    </location>
    <ligand>
        <name>Zn(2+)</name>
        <dbReference type="ChEBI" id="CHEBI:29105"/>
        <label>1</label>
    </ligand>
</feature>
<feature type="binding site" evidence="1">
    <location>
        <position position="79"/>
    </location>
    <ligand>
        <name>Zn(2+)</name>
        <dbReference type="ChEBI" id="CHEBI:29105"/>
        <label>1</label>
    </ligand>
</feature>
<feature type="binding site" evidence="1">
    <location>
        <position position="588"/>
    </location>
    <ligand>
        <name>Mg(2+)</name>
        <dbReference type="ChEBI" id="CHEBI:18420"/>
    </ligand>
</feature>
<feature type="binding site" evidence="1">
    <location>
        <position position="590"/>
    </location>
    <ligand>
        <name>Mg(2+)</name>
        <dbReference type="ChEBI" id="CHEBI:18420"/>
    </ligand>
</feature>
<feature type="binding site" evidence="1">
    <location>
        <position position="592"/>
    </location>
    <ligand>
        <name>Mg(2+)</name>
        <dbReference type="ChEBI" id="CHEBI:18420"/>
    </ligand>
</feature>
<feature type="binding site" evidence="1">
    <location>
        <position position="925"/>
    </location>
    <ligand>
        <name>Zn(2+)</name>
        <dbReference type="ChEBI" id="CHEBI:29105"/>
        <label>2</label>
    </ligand>
</feature>
<feature type="binding site" evidence="1">
    <location>
        <position position="999"/>
    </location>
    <ligand>
        <name>Zn(2+)</name>
        <dbReference type="ChEBI" id="CHEBI:29105"/>
        <label>2</label>
    </ligand>
</feature>
<feature type="binding site" evidence="1">
    <location>
        <position position="1006"/>
    </location>
    <ligand>
        <name>Zn(2+)</name>
        <dbReference type="ChEBI" id="CHEBI:29105"/>
        <label>2</label>
    </ligand>
</feature>
<feature type="binding site" evidence="1">
    <location>
        <position position="1009"/>
    </location>
    <ligand>
        <name>Zn(2+)</name>
        <dbReference type="ChEBI" id="CHEBI:29105"/>
        <label>2</label>
    </ligand>
</feature>
<reference key="1">
    <citation type="journal article" date="2009" name="J. Bacteriol.">
        <title>Complete and draft genome sequences of six members of the Aquificales.</title>
        <authorList>
            <person name="Reysenbach A.-L."/>
            <person name="Hamamura N."/>
            <person name="Podar M."/>
            <person name="Griffiths E."/>
            <person name="Ferreira S."/>
            <person name="Hochstein R."/>
            <person name="Heidelberg J."/>
            <person name="Johnson J."/>
            <person name="Mead D."/>
            <person name="Pohorille A."/>
            <person name="Sarmiento M."/>
            <person name="Schweighofer K."/>
            <person name="Seshadri R."/>
            <person name="Voytek M.A."/>
        </authorList>
    </citation>
    <scope>NUCLEOTIDE SEQUENCE [LARGE SCALE GENOMIC DNA]</scope>
    <source>
        <strain>Y04AAS1</strain>
    </source>
</reference>
<name>RPOC_HYDS0</name>
<protein>
    <recommendedName>
        <fullName evidence="1">DNA-directed RNA polymerase subunit beta'</fullName>
        <shortName evidence="1">RNAP subunit beta'</shortName>
        <ecNumber evidence="1">2.7.7.6</ecNumber>
    </recommendedName>
    <alternativeName>
        <fullName evidence="1">RNA polymerase subunit beta'</fullName>
    </alternativeName>
    <alternativeName>
        <fullName evidence="1">Transcriptase subunit beta'</fullName>
    </alternativeName>
</protein>
<dbReference type="EC" id="2.7.7.6" evidence="1"/>
<dbReference type="EMBL" id="CP001130">
    <property type="protein sequence ID" value="ACG56949.1"/>
    <property type="molecule type" value="Genomic_DNA"/>
</dbReference>
<dbReference type="RefSeq" id="WP_012513306.1">
    <property type="nucleotide sequence ID" value="NC_011126.1"/>
</dbReference>
<dbReference type="SMR" id="B4U738"/>
<dbReference type="STRING" id="380749.HY04AAS1_0259"/>
<dbReference type="KEGG" id="hya:HY04AAS1_0259"/>
<dbReference type="eggNOG" id="COG0086">
    <property type="taxonomic scope" value="Bacteria"/>
</dbReference>
<dbReference type="eggNOG" id="COG0433">
    <property type="taxonomic scope" value="Bacteria"/>
</dbReference>
<dbReference type="HOGENOM" id="CLU_000524_3_1_0"/>
<dbReference type="OrthoDB" id="9815296at2"/>
<dbReference type="GO" id="GO:0000428">
    <property type="term" value="C:DNA-directed RNA polymerase complex"/>
    <property type="evidence" value="ECO:0007669"/>
    <property type="project" value="UniProtKB-KW"/>
</dbReference>
<dbReference type="GO" id="GO:0003677">
    <property type="term" value="F:DNA binding"/>
    <property type="evidence" value="ECO:0007669"/>
    <property type="project" value="UniProtKB-UniRule"/>
</dbReference>
<dbReference type="GO" id="GO:0003899">
    <property type="term" value="F:DNA-directed RNA polymerase activity"/>
    <property type="evidence" value="ECO:0007669"/>
    <property type="project" value="UniProtKB-UniRule"/>
</dbReference>
<dbReference type="GO" id="GO:0000287">
    <property type="term" value="F:magnesium ion binding"/>
    <property type="evidence" value="ECO:0007669"/>
    <property type="project" value="UniProtKB-UniRule"/>
</dbReference>
<dbReference type="GO" id="GO:0008270">
    <property type="term" value="F:zinc ion binding"/>
    <property type="evidence" value="ECO:0007669"/>
    <property type="project" value="UniProtKB-UniRule"/>
</dbReference>
<dbReference type="GO" id="GO:0006351">
    <property type="term" value="P:DNA-templated transcription"/>
    <property type="evidence" value="ECO:0007669"/>
    <property type="project" value="UniProtKB-UniRule"/>
</dbReference>
<dbReference type="CDD" id="cd02655">
    <property type="entry name" value="RNAP_beta'_C"/>
    <property type="match status" value="1"/>
</dbReference>
<dbReference type="CDD" id="cd01609">
    <property type="entry name" value="RNAP_beta'_N"/>
    <property type="match status" value="1"/>
</dbReference>
<dbReference type="Gene3D" id="1.10.132.30">
    <property type="match status" value="1"/>
</dbReference>
<dbReference type="Gene3D" id="1.10.150.390">
    <property type="match status" value="1"/>
</dbReference>
<dbReference type="Gene3D" id="1.10.1790.20">
    <property type="match status" value="1"/>
</dbReference>
<dbReference type="Gene3D" id="1.10.40.90">
    <property type="match status" value="1"/>
</dbReference>
<dbReference type="Gene3D" id="2.40.40.20">
    <property type="match status" value="1"/>
</dbReference>
<dbReference type="Gene3D" id="2.40.50.100">
    <property type="match status" value="4"/>
</dbReference>
<dbReference type="Gene3D" id="4.10.860.120">
    <property type="entry name" value="RNA polymerase II, clamp domain"/>
    <property type="match status" value="1"/>
</dbReference>
<dbReference type="Gene3D" id="1.10.274.100">
    <property type="entry name" value="RNA polymerase Rpb1, domain 3"/>
    <property type="match status" value="2"/>
</dbReference>
<dbReference type="HAMAP" id="MF_01322">
    <property type="entry name" value="RNApol_bact_RpoC"/>
    <property type="match status" value="1"/>
</dbReference>
<dbReference type="InterPro" id="IPR045867">
    <property type="entry name" value="DNA-dir_RpoC_beta_prime"/>
</dbReference>
<dbReference type="InterPro" id="IPR012754">
    <property type="entry name" value="DNA-dir_RpoC_beta_prime_bact"/>
</dbReference>
<dbReference type="InterPro" id="IPR000722">
    <property type="entry name" value="RNA_pol_asu"/>
</dbReference>
<dbReference type="InterPro" id="IPR006592">
    <property type="entry name" value="RNA_pol_N"/>
</dbReference>
<dbReference type="InterPro" id="IPR007080">
    <property type="entry name" value="RNA_pol_Rpb1_1"/>
</dbReference>
<dbReference type="InterPro" id="IPR007066">
    <property type="entry name" value="RNA_pol_Rpb1_3"/>
</dbReference>
<dbReference type="InterPro" id="IPR042102">
    <property type="entry name" value="RNA_pol_Rpb1_3_sf"/>
</dbReference>
<dbReference type="InterPro" id="IPR007083">
    <property type="entry name" value="RNA_pol_Rpb1_4"/>
</dbReference>
<dbReference type="InterPro" id="IPR007081">
    <property type="entry name" value="RNA_pol_Rpb1_5"/>
</dbReference>
<dbReference type="InterPro" id="IPR044893">
    <property type="entry name" value="RNA_pol_Rpb1_clamp_domain"/>
</dbReference>
<dbReference type="InterPro" id="IPR038120">
    <property type="entry name" value="Rpb1_funnel_sf"/>
</dbReference>
<dbReference type="InterPro" id="IPR011054">
    <property type="entry name" value="Rudment_hybrid_motif"/>
</dbReference>
<dbReference type="NCBIfam" id="TIGR02386">
    <property type="entry name" value="rpoC_TIGR"/>
    <property type="match status" value="1"/>
</dbReference>
<dbReference type="PANTHER" id="PTHR19376">
    <property type="entry name" value="DNA-DIRECTED RNA POLYMERASE"/>
    <property type="match status" value="1"/>
</dbReference>
<dbReference type="PANTHER" id="PTHR19376:SF54">
    <property type="entry name" value="DNA-DIRECTED RNA POLYMERASE SUBUNIT BETA"/>
    <property type="match status" value="1"/>
</dbReference>
<dbReference type="Pfam" id="PF04997">
    <property type="entry name" value="RNA_pol_Rpb1_1"/>
    <property type="match status" value="1"/>
</dbReference>
<dbReference type="Pfam" id="PF00623">
    <property type="entry name" value="RNA_pol_Rpb1_2"/>
    <property type="match status" value="1"/>
</dbReference>
<dbReference type="Pfam" id="PF04983">
    <property type="entry name" value="RNA_pol_Rpb1_3"/>
    <property type="match status" value="1"/>
</dbReference>
<dbReference type="Pfam" id="PF05000">
    <property type="entry name" value="RNA_pol_Rpb1_4"/>
    <property type="match status" value="1"/>
</dbReference>
<dbReference type="Pfam" id="PF04998">
    <property type="entry name" value="RNA_pol_Rpb1_5"/>
    <property type="match status" value="1"/>
</dbReference>
<dbReference type="SMART" id="SM00663">
    <property type="entry name" value="RPOLA_N"/>
    <property type="match status" value="1"/>
</dbReference>
<dbReference type="SUPFAM" id="SSF64484">
    <property type="entry name" value="beta and beta-prime subunits of DNA dependent RNA-polymerase"/>
    <property type="match status" value="1"/>
</dbReference>
<dbReference type="SUPFAM" id="SSF51246">
    <property type="entry name" value="Rudiment single hybrid motif"/>
    <property type="match status" value="1"/>
</dbReference>
<organism>
    <name type="scientific">Hydrogenobaculum sp. (strain Y04AAS1)</name>
    <dbReference type="NCBI Taxonomy" id="380749"/>
    <lineage>
        <taxon>Bacteria</taxon>
        <taxon>Pseudomonadati</taxon>
        <taxon>Aquificota</taxon>
        <taxon>Aquificia</taxon>
        <taxon>Aquificales</taxon>
        <taxon>Aquificaceae</taxon>
        <taxon>Hydrogenobaculum</taxon>
    </lineage>
</organism>
<keyword id="KW-0240">DNA-directed RNA polymerase</keyword>
<keyword id="KW-0460">Magnesium</keyword>
<keyword id="KW-0479">Metal-binding</keyword>
<keyword id="KW-0548">Nucleotidyltransferase</keyword>
<keyword id="KW-0804">Transcription</keyword>
<keyword id="KW-0808">Transferase</keyword>
<keyword id="KW-0862">Zinc</keyword>
<comment type="function">
    <text evidence="1">DNA-dependent RNA polymerase catalyzes the transcription of DNA into RNA using the four ribonucleoside triphosphates as substrates.</text>
</comment>
<comment type="catalytic activity">
    <reaction evidence="1">
        <text>RNA(n) + a ribonucleoside 5'-triphosphate = RNA(n+1) + diphosphate</text>
        <dbReference type="Rhea" id="RHEA:21248"/>
        <dbReference type="Rhea" id="RHEA-COMP:14527"/>
        <dbReference type="Rhea" id="RHEA-COMP:17342"/>
        <dbReference type="ChEBI" id="CHEBI:33019"/>
        <dbReference type="ChEBI" id="CHEBI:61557"/>
        <dbReference type="ChEBI" id="CHEBI:140395"/>
        <dbReference type="EC" id="2.7.7.6"/>
    </reaction>
</comment>
<comment type="cofactor">
    <cofactor evidence="1">
        <name>Mg(2+)</name>
        <dbReference type="ChEBI" id="CHEBI:18420"/>
    </cofactor>
    <text evidence="1">Binds 1 Mg(2+) ion per subunit.</text>
</comment>
<comment type="cofactor">
    <cofactor evidence="1">
        <name>Zn(2+)</name>
        <dbReference type="ChEBI" id="CHEBI:29105"/>
    </cofactor>
    <text evidence="1">Binds 2 Zn(2+) ions per subunit.</text>
</comment>
<comment type="subunit">
    <text evidence="1">The RNAP catalytic core consists of 2 alpha, 1 beta, 1 beta' and 1 omega subunit. When a sigma factor is associated with the core the holoenzyme is formed, which can initiate transcription.</text>
</comment>
<comment type="similarity">
    <text evidence="1">Belongs to the RNA polymerase beta' chain family.</text>
</comment>
<gene>
    <name evidence="1" type="primary">rpoC</name>
    <name type="ordered locus">HY04AAS1_0259</name>
</gene>